<sequence>MLCFQCEQTHSGTGCVIRGVCTKTPEVAAIQDLMIFASAGLSYVAKKLPDSCEAERKEAASLVIQALFSTVTNVNFDADVLTKALYHLVDFRDALKAKLPEDVELPLAATLDFSRDRETLVKQGESYGIASRQKTLGIDVTGLQELLTYGMKGMAAYAHHAAVLDYRDPDVDNFLLEGMAALTDHSLDIQALLAVVMRCGEASYKTLALLDKANTSSFGHPVPTNVKMGPSKGKAILVSGHDLLDMKELLEQTKDTGIKVYTHGEMLPAHGYPELNKYPHLAGHYGGAWMLQRQEFINFPGPIVMTTNCLMEPRKEYAGRVFTRDLVGWPGLTHLPDRDFSKVIEAALESEGFTEDQESRSHIAGFGHHTVLDSADAVVSAIKKGDIKHFMLVGGCDGIKSGRHYFTDIAEKAPKDWVILTLGCGKFRVTDLDLGKIGDLPRLLDMGQCNDSYSAIRVALALAEAFDTDVNSLPLSLVLSWYEQKAVCVLLALLHLGVKGIRLGPTLPAFITPNMLKILVDNFDIKPIGNSAEEDLQEILAAKAA</sequence>
<feature type="chain" id="PRO_1000009185" description="Hydroxylamine reductase">
    <location>
        <begin position="1"/>
        <end position="545"/>
    </location>
</feature>
<feature type="binding site" evidence="1">
    <location>
        <position position="3"/>
    </location>
    <ligand>
        <name>[4Fe-4S] cluster</name>
        <dbReference type="ChEBI" id="CHEBI:49883"/>
    </ligand>
</feature>
<feature type="binding site" evidence="1">
    <location>
        <position position="6"/>
    </location>
    <ligand>
        <name>[4Fe-4S] cluster</name>
        <dbReference type="ChEBI" id="CHEBI:49883"/>
    </ligand>
</feature>
<feature type="binding site" evidence="1">
    <location>
        <position position="15"/>
    </location>
    <ligand>
        <name>[4Fe-4S] cluster</name>
        <dbReference type="ChEBI" id="CHEBI:49883"/>
    </ligand>
</feature>
<feature type="binding site" evidence="1">
    <location>
        <position position="21"/>
    </location>
    <ligand>
        <name>[4Fe-4S] cluster</name>
        <dbReference type="ChEBI" id="CHEBI:49883"/>
    </ligand>
</feature>
<feature type="binding site" evidence="1">
    <location>
        <position position="241"/>
    </location>
    <ligand>
        <name>hybrid [4Fe-2O-2S] cluster</name>
        <dbReference type="ChEBI" id="CHEBI:60519"/>
    </ligand>
</feature>
<feature type="binding site" evidence="1">
    <location>
        <position position="265"/>
    </location>
    <ligand>
        <name>hybrid [4Fe-2O-2S] cluster</name>
        <dbReference type="ChEBI" id="CHEBI:60519"/>
    </ligand>
</feature>
<feature type="binding site" evidence="1">
    <location>
        <position position="309"/>
    </location>
    <ligand>
        <name>hybrid [4Fe-2O-2S] cluster</name>
        <dbReference type="ChEBI" id="CHEBI:60519"/>
    </ligand>
</feature>
<feature type="binding site" description="via persulfide group" evidence="1">
    <location>
        <position position="396"/>
    </location>
    <ligand>
        <name>hybrid [4Fe-2O-2S] cluster</name>
        <dbReference type="ChEBI" id="CHEBI:60519"/>
    </ligand>
</feature>
<feature type="binding site" evidence="1">
    <location>
        <position position="424"/>
    </location>
    <ligand>
        <name>hybrid [4Fe-2O-2S] cluster</name>
        <dbReference type="ChEBI" id="CHEBI:60519"/>
    </ligand>
</feature>
<feature type="binding site" evidence="1">
    <location>
        <position position="449"/>
    </location>
    <ligand>
        <name>hybrid [4Fe-2O-2S] cluster</name>
        <dbReference type="ChEBI" id="CHEBI:60519"/>
    </ligand>
</feature>
<feature type="binding site" evidence="1">
    <location>
        <position position="483"/>
    </location>
    <ligand>
        <name>hybrid [4Fe-2O-2S] cluster</name>
        <dbReference type="ChEBI" id="CHEBI:60519"/>
    </ligand>
</feature>
<feature type="binding site" evidence="1">
    <location>
        <position position="485"/>
    </location>
    <ligand>
        <name>hybrid [4Fe-2O-2S] cluster</name>
        <dbReference type="ChEBI" id="CHEBI:60519"/>
    </ligand>
</feature>
<feature type="modified residue" description="Cysteine persulfide" evidence="1">
    <location>
        <position position="396"/>
    </location>
</feature>
<dbReference type="EC" id="1.7.99.1" evidence="1"/>
<dbReference type="EMBL" id="AE008692">
    <property type="protein sequence ID" value="AAV88741.1"/>
    <property type="molecule type" value="Genomic_DNA"/>
</dbReference>
<dbReference type="RefSeq" id="WP_011240086.1">
    <property type="nucleotide sequence ID" value="NZ_CP035711.1"/>
</dbReference>
<dbReference type="SMR" id="Q5NRB3"/>
<dbReference type="STRING" id="264203.ZMO0117"/>
<dbReference type="GeneID" id="79904637"/>
<dbReference type="KEGG" id="zmo:ZMO0117"/>
<dbReference type="eggNOG" id="COG1151">
    <property type="taxonomic scope" value="Bacteria"/>
</dbReference>
<dbReference type="HOGENOM" id="CLU_038344_2_0_5"/>
<dbReference type="Proteomes" id="UP000001173">
    <property type="component" value="Chromosome"/>
</dbReference>
<dbReference type="GO" id="GO:0005737">
    <property type="term" value="C:cytoplasm"/>
    <property type="evidence" value="ECO:0007669"/>
    <property type="project" value="UniProtKB-SubCell"/>
</dbReference>
<dbReference type="GO" id="GO:0051539">
    <property type="term" value="F:4 iron, 4 sulfur cluster binding"/>
    <property type="evidence" value="ECO:0007669"/>
    <property type="project" value="UniProtKB-KW"/>
</dbReference>
<dbReference type="GO" id="GO:0050418">
    <property type="term" value="F:hydroxylamine reductase activity"/>
    <property type="evidence" value="ECO:0007669"/>
    <property type="project" value="UniProtKB-UniRule"/>
</dbReference>
<dbReference type="GO" id="GO:0046872">
    <property type="term" value="F:metal ion binding"/>
    <property type="evidence" value="ECO:0007669"/>
    <property type="project" value="UniProtKB-KW"/>
</dbReference>
<dbReference type="GO" id="GO:0004601">
    <property type="term" value="F:peroxidase activity"/>
    <property type="evidence" value="ECO:0007669"/>
    <property type="project" value="TreeGrafter"/>
</dbReference>
<dbReference type="GO" id="GO:0042542">
    <property type="term" value="P:response to hydrogen peroxide"/>
    <property type="evidence" value="ECO:0007669"/>
    <property type="project" value="TreeGrafter"/>
</dbReference>
<dbReference type="CDD" id="cd01914">
    <property type="entry name" value="HCP"/>
    <property type="match status" value="1"/>
</dbReference>
<dbReference type="FunFam" id="1.20.1270.20:FF:000001">
    <property type="entry name" value="Hydroxylamine reductase"/>
    <property type="match status" value="1"/>
</dbReference>
<dbReference type="FunFam" id="3.40.50.2030:FF:000001">
    <property type="entry name" value="Hydroxylamine reductase"/>
    <property type="match status" value="1"/>
</dbReference>
<dbReference type="FunFam" id="3.40.50.2030:FF:000002">
    <property type="entry name" value="Hydroxylamine reductase"/>
    <property type="match status" value="1"/>
</dbReference>
<dbReference type="Gene3D" id="1.20.1270.20">
    <property type="match status" value="2"/>
</dbReference>
<dbReference type="Gene3D" id="3.40.50.2030">
    <property type="match status" value="2"/>
</dbReference>
<dbReference type="HAMAP" id="MF_00069">
    <property type="entry name" value="Hydroxylam_reduct"/>
    <property type="match status" value="1"/>
</dbReference>
<dbReference type="InterPro" id="IPR004137">
    <property type="entry name" value="HCP/CODH"/>
</dbReference>
<dbReference type="InterPro" id="IPR010048">
    <property type="entry name" value="Hydroxylam_reduct"/>
</dbReference>
<dbReference type="InterPro" id="IPR016099">
    <property type="entry name" value="Prismane-like_a/b-sand"/>
</dbReference>
<dbReference type="InterPro" id="IPR011254">
    <property type="entry name" value="Prismane-like_sf"/>
</dbReference>
<dbReference type="InterPro" id="IPR016100">
    <property type="entry name" value="Prismane_a-bundle"/>
</dbReference>
<dbReference type="NCBIfam" id="TIGR01703">
    <property type="entry name" value="hybrid_clust"/>
    <property type="match status" value="1"/>
</dbReference>
<dbReference type="NCBIfam" id="NF003658">
    <property type="entry name" value="PRK05290.1"/>
    <property type="match status" value="1"/>
</dbReference>
<dbReference type="PANTHER" id="PTHR30109">
    <property type="entry name" value="HYDROXYLAMINE REDUCTASE"/>
    <property type="match status" value="1"/>
</dbReference>
<dbReference type="PANTHER" id="PTHR30109:SF0">
    <property type="entry name" value="HYDROXYLAMINE REDUCTASE"/>
    <property type="match status" value="1"/>
</dbReference>
<dbReference type="Pfam" id="PF03063">
    <property type="entry name" value="Prismane"/>
    <property type="match status" value="1"/>
</dbReference>
<dbReference type="PIRSF" id="PIRSF000076">
    <property type="entry name" value="HCP"/>
    <property type="match status" value="1"/>
</dbReference>
<dbReference type="SUPFAM" id="SSF56821">
    <property type="entry name" value="Prismane protein-like"/>
    <property type="match status" value="1"/>
</dbReference>
<gene>
    <name evidence="1" type="primary">hcp</name>
    <name type="ordered locus">ZMO0117</name>
</gene>
<proteinExistence type="inferred from homology"/>
<organism>
    <name type="scientific">Zymomonas mobilis subsp. mobilis (strain ATCC 31821 / ZM4 / CP4)</name>
    <dbReference type="NCBI Taxonomy" id="264203"/>
    <lineage>
        <taxon>Bacteria</taxon>
        <taxon>Pseudomonadati</taxon>
        <taxon>Pseudomonadota</taxon>
        <taxon>Alphaproteobacteria</taxon>
        <taxon>Sphingomonadales</taxon>
        <taxon>Zymomonadaceae</taxon>
        <taxon>Zymomonas</taxon>
    </lineage>
</organism>
<keyword id="KW-0004">4Fe-4S</keyword>
<keyword id="KW-0963">Cytoplasm</keyword>
<keyword id="KW-0408">Iron</keyword>
<keyword id="KW-0411">Iron-sulfur</keyword>
<keyword id="KW-0479">Metal-binding</keyword>
<keyword id="KW-0560">Oxidoreductase</keyword>
<keyword id="KW-1185">Reference proteome</keyword>
<accession>Q5NRB3</accession>
<evidence type="ECO:0000255" key="1">
    <source>
        <dbReference type="HAMAP-Rule" id="MF_00069"/>
    </source>
</evidence>
<name>HCP_ZYMMO</name>
<reference key="1">
    <citation type="journal article" date="2005" name="Nat. Biotechnol.">
        <title>The genome sequence of the ethanologenic bacterium Zymomonas mobilis ZM4.</title>
        <authorList>
            <person name="Seo J.-S."/>
            <person name="Chong H."/>
            <person name="Park H.S."/>
            <person name="Yoon K.-O."/>
            <person name="Jung C."/>
            <person name="Kim J.J."/>
            <person name="Hong J.H."/>
            <person name="Kim H."/>
            <person name="Kim J.-H."/>
            <person name="Kil J.-I."/>
            <person name="Park C.J."/>
            <person name="Oh H.-M."/>
            <person name="Lee J.-S."/>
            <person name="Jin S.-J."/>
            <person name="Um H.-W."/>
            <person name="Lee H.-J."/>
            <person name="Oh S.-J."/>
            <person name="Kim J.Y."/>
            <person name="Kang H.L."/>
            <person name="Lee S.Y."/>
            <person name="Lee K.J."/>
            <person name="Kang H.S."/>
        </authorList>
    </citation>
    <scope>NUCLEOTIDE SEQUENCE [LARGE SCALE GENOMIC DNA]</scope>
    <source>
        <strain>ATCC 31821 / ZM4 / CP4</strain>
    </source>
</reference>
<protein>
    <recommendedName>
        <fullName evidence="1">Hydroxylamine reductase</fullName>
        <ecNumber evidence="1">1.7.99.1</ecNumber>
    </recommendedName>
    <alternativeName>
        <fullName evidence="1">Hybrid-cluster protein</fullName>
        <shortName evidence="1">HCP</shortName>
    </alternativeName>
    <alternativeName>
        <fullName evidence="1">Prismane protein</fullName>
    </alternativeName>
</protein>
<comment type="function">
    <text evidence="1">Catalyzes the reduction of hydroxylamine to form NH(3) and H(2)O.</text>
</comment>
<comment type="catalytic activity">
    <reaction evidence="1">
        <text>A + NH4(+) + H2O = hydroxylamine + AH2 + H(+)</text>
        <dbReference type="Rhea" id="RHEA:22052"/>
        <dbReference type="ChEBI" id="CHEBI:13193"/>
        <dbReference type="ChEBI" id="CHEBI:15377"/>
        <dbReference type="ChEBI" id="CHEBI:15378"/>
        <dbReference type="ChEBI" id="CHEBI:15429"/>
        <dbReference type="ChEBI" id="CHEBI:17499"/>
        <dbReference type="ChEBI" id="CHEBI:28938"/>
        <dbReference type="EC" id="1.7.99.1"/>
    </reaction>
</comment>
<comment type="cofactor">
    <cofactor evidence="1">
        <name>[4Fe-4S] cluster</name>
        <dbReference type="ChEBI" id="CHEBI:49883"/>
    </cofactor>
    <text evidence="1">Binds 1 [4Fe-4S] cluster.</text>
</comment>
<comment type="cofactor">
    <cofactor evidence="1">
        <name>hybrid [4Fe-2O-2S] cluster</name>
        <dbReference type="ChEBI" id="CHEBI:60519"/>
    </cofactor>
    <text evidence="1">Binds 1 hybrid [4Fe-2O-2S] cluster.</text>
</comment>
<comment type="subcellular location">
    <subcellularLocation>
        <location evidence="1">Cytoplasm</location>
    </subcellularLocation>
</comment>
<comment type="similarity">
    <text evidence="1">Belongs to the HCP family.</text>
</comment>